<feature type="chain" id="PRO_1000100951" description="ATP-dependent protease ATPase subunit HslU">
    <location>
        <begin position="1"/>
        <end position="443"/>
    </location>
</feature>
<feature type="binding site" evidence="1">
    <location>
        <position position="20"/>
    </location>
    <ligand>
        <name>ATP</name>
        <dbReference type="ChEBI" id="CHEBI:30616"/>
    </ligand>
</feature>
<feature type="binding site" evidence="1">
    <location>
        <begin position="62"/>
        <end position="67"/>
    </location>
    <ligand>
        <name>ATP</name>
        <dbReference type="ChEBI" id="CHEBI:30616"/>
    </ligand>
</feature>
<feature type="binding site" evidence="1">
    <location>
        <position position="255"/>
    </location>
    <ligand>
        <name>ATP</name>
        <dbReference type="ChEBI" id="CHEBI:30616"/>
    </ligand>
</feature>
<feature type="binding site" evidence="1">
    <location>
        <position position="321"/>
    </location>
    <ligand>
        <name>ATP</name>
        <dbReference type="ChEBI" id="CHEBI:30616"/>
    </ligand>
</feature>
<feature type="binding site" evidence="1">
    <location>
        <position position="393"/>
    </location>
    <ligand>
        <name>ATP</name>
        <dbReference type="ChEBI" id="CHEBI:30616"/>
    </ligand>
</feature>
<gene>
    <name evidence="1" type="primary">hslU</name>
    <name type="ordered locus">HPP12_0522</name>
</gene>
<evidence type="ECO:0000255" key="1">
    <source>
        <dbReference type="HAMAP-Rule" id="MF_00249"/>
    </source>
</evidence>
<protein>
    <recommendedName>
        <fullName evidence="1">ATP-dependent protease ATPase subunit HslU</fullName>
    </recommendedName>
    <alternativeName>
        <fullName evidence="1">Unfoldase HslU</fullName>
    </alternativeName>
</protein>
<sequence>MSKLNMTPREIVAYLDEYIIGQKEAKKSIAIAFRNRYRRLQLEKSLQEEITPKNILMIGSTGVGKTEIARRIAKIMELPFVKVEASKYTEVGFVGRDVESMVRDLVNNSVLLVENEHKEKLKDKIEEAVIEKIAKKLLPPLPSGVSEEKKQEYANSLLKMQQRIAQGELDSREIEIEVRKKSIEIDSNVPPEILRVQENLIKVFHKEQDKVKKTLSVKEAKEALKAEISDTLLDSEAIKMEGLKRAESSGVIFIDEIDKIAVSSKEGSRQDPSKEGVQRDLLPIVEGSVVNTKYGSIKTEHILFIAAGAFHLSKPSDLIPELQGRFPLRVELENLTEEIMYMILTQTKTSIIKQYQALLKVEGVGIAFEDDAIKELAKLSYNANQKSEDIGARRLHTTIEKVLEDISFEAEDYSGQKVTITKELVQSKLEDLVADENLVKYIL</sequence>
<organism>
    <name type="scientific">Helicobacter pylori (strain P12)</name>
    <dbReference type="NCBI Taxonomy" id="570508"/>
    <lineage>
        <taxon>Bacteria</taxon>
        <taxon>Pseudomonadati</taxon>
        <taxon>Campylobacterota</taxon>
        <taxon>Epsilonproteobacteria</taxon>
        <taxon>Campylobacterales</taxon>
        <taxon>Helicobacteraceae</taxon>
        <taxon>Helicobacter</taxon>
    </lineage>
</organism>
<dbReference type="EMBL" id="CP001217">
    <property type="protein sequence ID" value="ACJ07676.1"/>
    <property type="molecule type" value="Genomic_DNA"/>
</dbReference>
<dbReference type="SMR" id="B6JL98"/>
<dbReference type="KEGG" id="hpp:HPP12_0522"/>
<dbReference type="HOGENOM" id="CLU_033123_0_0_7"/>
<dbReference type="Proteomes" id="UP000008198">
    <property type="component" value="Chromosome"/>
</dbReference>
<dbReference type="GO" id="GO:0009376">
    <property type="term" value="C:HslUV protease complex"/>
    <property type="evidence" value="ECO:0007669"/>
    <property type="project" value="UniProtKB-UniRule"/>
</dbReference>
<dbReference type="GO" id="GO:0005524">
    <property type="term" value="F:ATP binding"/>
    <property type="evidence" value="ECO:0007669"/>
    <property type="project" value="UniProtKB-UniRule"/>
</dbReference>
<dbReference type="GO" id="GO:0016887">
    <property type="term" value="F:ATP hydrolysis activity"/>
    <property type="evidence" value="ECO:0007669"/>
    <property type="project" value="InterPro"/>
</dbReference>
<dbReference type="GO" id="GO:0008233">
    <property type="term" value="F:peptidase activity"/>
    <property type="evidence" value="ECO:0007669"/>
    <property type="project" value="InterPro"/>
</dbReference>
<dbReference type="GO" id="GO:0036402">
    <property type="term" value="F:proteasome-activating activity"/>
    <property type="evidence" value="ECO:0007669"/>
    <property type="project" value="UniProtKB-UniRule"/>
</dbReference>
<dbReference type="GO" id="GO:0043335">
    <property type="term" value="P:protein unfolding"/>
    <property type="evidence" value="ECO:0007669"/>
    <property type="project" value="UniProtKB-UniRule"/>
</dbReference>
<dbReference type="GO" id="GO:0051603">
    <property type="term" value="P:proteolysis involved in protein catabolic process"/>
    <property type="evidence" value="ECO:0007669"/>
    <property type="project" value="TreeGrafter"/>
</dbReference>
<dbReference type="CDD" id="cd19498">
    <property type="entry name" value="RecA-like_HslU"/>
    <property type="match status" value="1"/>
</dbReference>
<dbReference type="Gene3D" id="1.10.8.60">
    <property type="match status" value="1"/>
</dbReference>
<dbReference type="Gene3D" id="3.40.50.300">
    <property type="entry name" value="P-loop containing nucleotide triphosphate hydrolases"/>
    <property type="match status" value="2"/>
</dbReference>
<dbReference type="HAMAP" id="MF_00249">
    <property type="entry name" value="HslU"/>
    <property type="match status" value="1"/>
</dbReference>
<dbReference type="InterPro" id="IPR003593">
    <property type="entry name" value="AAA+_ATPase"/>
</dbReference>
<dbReference type="InterPro" id="IPR050052">
    <property type="entry name" value="ATP-dep_Clp_protease_ClpX"/>
</dbReference>
<dbReference type="InterPro" id="IPR003959">
    <property type="entry name" value="ATPase_AAA_core"/>
</dbReference>
<dbReference type="InterPro" id="IPR019489">
    <property type="entry name" value="Clp_ATPase_C"/>
</dbReference>
<dbReference type="InterPro" id="IPR004491">
    <property type="entry name" value="HslU"/>
</dbReference>
<dbReference type="InterPro" id="IPR027417">
    <property type="entry name" value="P-loop_NTPase"/>
</dbReference>
<dbReference type="NCBIfam" id="TIGR00390">
    <property type="entry name" value="hslU"/>
    <property type="match status" value="1"/>
</dbReference>
<dbReference type="NCBIfam" id="NF003544">
    <property type="entry name" value="PRK05201.1"/>
    <property type="match status" value="1"/>
</dbReference>
<dbReference type="PANTHER" id="PTHR48102">
    <property type="entry name" value="ATP-DEPENDENT CLP PROTEASE ATP-BINDING SUBUNIT CLPX-LIKE, MITOCHONDRIAL-RELATED"/>
    <property type="match status" value="1"/>
</dbReference>
<dbReference type="PANTHER" id="PTHR48102:SF3">
    <property type="entry name" value="ATP-DEPENDENT PROTEASE ATPASE SUBUNIT HSLU"/>
    <property type="match status" value="1"/>
</dbReference>
<dbReference type="Pfam" id="PF00004">
    <property type="entry name" value="AAA"/>
    <property type="match status" value="1"/>
</dbReference>
<dbReference type="Pfam" id="PF07724">
    <property type="entry name" value="AAA_2"/>
    <property type="match status" value="1"/>
</dbReference>
<dbReference type="SMART" id="SM00382">
    <property type="entry name" value="AAA"/>
    <property type="match status" value="1"/>
</dbReference>
<dbReference type="SMART" id="SM01086">
    <property type="entry name" value="ClpB_D2-small"/>
    <property type="match status" value="1"/>
</dbReference>
<dbReference type="SUPFAM" id="SSF52540">
    <property type="entry name" value="P-loop containing nucleoside triphosphate hydrolases"/>
    <property type="match status" value="1"/>
</dbReference>
<accession>B6JL98</accession>
<name>HSLU_HELP2</name>
<reference key="1">
    <citation type="submission" date="2008-10" db="EMBL/GenBank/DDBJ databases">
        <title>The complete genome sequence of Helicobacter pylori strain P12.</title>
        <authorList>
            <person name="Fischer W."/>
            <person name="Windhager L."/>
            <person name="Karnholz A."/>
            <person name="Zeiller M."/>
            <person name="Zimmer R."/>
            <person name="Haas R."/>
        </authorList>
    </citation>
    <scope>NUCLEOTIDE SEQUENCE [LARGE SCALE GENOMIC DNA]</scope>
    <source>
        <strain>P12</strain>
    </source>
</reference>
<keyword id="KW-0067">ATP-binding</keyword>
<keyword id="KW-0143">Chaperone</keyword>
<keyword id="KW-0963">Cytoplasm</keyword>
<keyword id="KW-0547">Nucleotide-binding</keyword>
<keyword id="KW-0346">Stress response</keyword>
<proteinExistence type="inferred from homology"/>
<comment type="function">
    <text evidence="1">ATPase subunit of a proteasome-like degradation complex; this subunit has chaperone activity. The binding of ATP and its subsequent hydrolysis by HslU are essential for unfolding of protein substrates subsequently hydrolyzed by HslV. HslU recognizes the N-terminal part of its protein substrates and unfolds these before they are guided to HslV for hydrolysis.</text>
</comment>
<comment type="subunit">
    <text evidence="1">A double ring-shaped homohexamer of HslV is capped on each side by a ring-shaped HslU homohexamer. The assembly of the HslU/HslV complex is dependent on binding of ATP.</text>
</comment>
<comment type="subcellular location">
    <subcellularLocation>
        <location evidence="1">Cytoplasm</location>
    </subcellularLocation>
</comment>
<comment type="similarity">
    <text evidence="1">Belongs to the ClpX chaperone family. HslU subfamily.</text>
</comment>